<keyword id="KW-0175">Coiled coil</keyword>
<keyword id="KW-0539">Nucleus</keyword>
<keyword id="KW-1185">Reference proteome</keyword>
<reference key="1">
    <citation type="journal article" date="2005" name="Nature">
        <title>The genome of the social amoeba Dictyostelium discoideum.</title>
        <authorList>
            <person name="Eichinger L."/>
            <person name="Pachebat J.A."/>
            <person name="Gloeckner G."/>
            <person name="Rajandream M.A."/>
            <person name="Sucgang R."/>
            <person name="Berriman M."/>
            <person name="Song J."/>
            <person name="Olsen R."/>
            <person name="Szafranski K."/>
            <person name="Xu Q."/>
            <person name="Tunggal B."/>
            <person name="Kummerfeld S."/>
            <person name="Madera M."/>
            <person name="Konfortov B.A."/>
            <person name="Rivero F."/>
            <person name="Bankier A.T."/>
            <person name="Lehmann R."/>
            <person name="Hamlin N."/>
            <person name="Davies R."/>
            <person name="Gaudet P."/>
            <person name="Fey P."/>
            <person name="Pilcher K."/>
            <person name="Chen G."/>
            <person name="Saunders D."/>
            <person name="Sodergren E.J."/>
            <person name="Davis P."/>
            <person name="Kerhornou A."/>
            <person name="Nie X."/>
            <person name="Hall N."/>
            <person name="Anjard C."/>
            <person name="Hemphill L."/>
            <person name="Bason N."/>
            <person name="Farbrother P."/>
            <person name="Desany B."/>
            <person name="Just E."/>
            <person name="Morio T."/>
            <person name="Rost R."/>
            <person name="Churcher C.M."/>
            <person name="Cooper J."/>
            <person name="Haydock S."/>
            <person name="van Driessche N."/>
            <person name="Cronin A."/>
            <person name="Goodhead I."/>
            <person name="Muzny D.M."/>
            <person name="Mourier T."/>
            <person name="Pain A."/>
            <person name="Lu M."/>
            <person name="Harper D."/>
            <person name="Lindsay R."/>
            <person name="Hauser H."/>
            <person name="James K.D."/>
            <person name="Quiles M."/>
            <person name="Madan Babu M."/>
            <person name="Saito T."/>
            <person name="Buchrieser C."/>
            <person name="Wardroper A."/>
            <person name="Felder M."/>
            <person name="Thangavelu M."/>
            <person name="Johnson D."/>
            <person name="Knights A."/>
            <person name="Loulseged H."/>
            <person name="Mungall K.L."/>
            <person name="Oliver K."/>
            <person name="Price C."/>
            <person name="Quail M.A."/>
            <person name="Urushihara H."/>
            <person name="Hernandez J."/>
            <person name="Rabbinowitsch E."/>
            <person name="Steffen D."/>
            <person name="Sanders M."/>
            <person name="Ma J."/>
            <person name="Kohara Y."/>
            <person name="Sharp S."/>
            <person name="Simmonds M.N."/>
            <person name="Spiegler S."/>
            <person name="Tivey A."/>
            <person name="Sugano S."/>
            <person name="White B."/>
            <person name="Walker D."/>
            <person name="Woodward J.R."/>
            <person name="Winckler T."/>
            <person name="Tanaka Y."/>
            <person name="Shaulsky G."/>
            <person name="Schleicher M."/>
            <person name="Weinstock G.M."/>
            <person name="Rosenthal A."/>
            <person name="Cox E.C."/>
            <person name="Chisholm R.L."/>
            <person name="Gibbs R.A."/>
            <person name="Loomis W.F."/>
            <person name="Platzer M."/>
            <person name="Kay R.R."/>
            <person name="Williams J.G."/>
            <person name="Dear P.H."/>
            <person name="Noegel A.A."/>
            <person name="Barrell B.G."/>
            <person name="Kuspa A."/>
        </authorList>
    </citation>
    <scope>NUCLEOTIDE SEQUENCE [LARGE SCALE GENOMIC DNA]</scope>
    <source>
        <strain>AX4</strain>
    </source>
</reference>
<feature type="chain" id="PRO_0000363984" description="DDT domain-containing protein DDB_G0282237">
    <location>
        <begin position="1"/>
        <end position="885"/>
    </location>
</feature>
<feature type="domain" description="WAC" evidence="3">
    <location>
        <begin position="20"/>
        <end position="125"/>
    </location>
</feature>
<feature type="domain" description="DDT" evidence="2">
    <location>
        <begin position="443"/>
        <end position="503"/>
    </location>
</feature>
<feature type="region of interest" description="Disordered" evidence="4">
    <location>
        <begin position="141"/>
        <end position="184"/>
    </location>
</feature>
<feature type="region of interest" description="Disordered" evidence="4">
    <location>
        <begin position="201"/>
        <end position="264"/>
    </location>
</feature>
<feature type="region of interest" description="Disordered" evidence="4">
    <location>
        <begin position="367"/>
        <end position="431"/>
    </location>
</feature>
<feature type="region of interest" description="Disordered" evidence="4">
    <location>
        <begin position="562"/>
        <end position="632"/>
    </location>
</feature>
<feature type="region of interest" description="Disordered" evidence="4">
    <location>
        <begin position="707"/>
        <end position="744"/>
    </location>
</feature>
<feature type="coiled-coil region" evidence="1">
    <location>
        <begin position="217"/>
        <end position="260"/>
    </location>
</feature>
<feature type="coiled-coil region" evidence="1">
    <location>
        <begin position="530"/>
        <end position="565"/>
    </location>
</feature>
<feature type="coiled-coil region" evidence="1">
    <location>
        <begin position="593"/>
        <end position="628"/>
    </location>
</feature>
<feature type="coiled-coil region" evidence="1">
    <location>
        <begin position="674"/>
        <end position="782"/>
    </location>
</feature>
<feature type="compositionally biased region" description="Low complexity" evidence="4">
    <location>
        <begin position="154"/>
        <end position="180"/>
    </location>
</feature>
<feature type="compositionally biased region" description="Basic and acidic residues" evidence="4">
    <location>
        <begin position="210"/>
        <end position="264"/>
    </location>
</feature>
<feature type="compositionally biased region" description="Acidic residues" evidence="4">
    <location>
        <begin position="367"/>
        <end position="379"/>
    </location>
</feature>
<feature type="compositionally biased region" description="Low complexity" evidence="4">
    <location>
        <begin position="380"/>
        <end position="396"/>
    </location>
</feature>
<feature type="compositionally biased region" description="Acidic residues" evidence="4">
    <location>
        <begin position="567"/>
        <end position="577"/>
    </location>
</feature>
<feature type="compositionally biased region" description="Basic and acidic residues" evidence="4">
    <location>
        <begin position="578"/>
        <end position="603"/>
    </location>
</feature>
<feature type="compositionally biased region" description="Acidic residues" evidence="4">
    <location>
        <begin position="604"/>
        <end position="631"/>
    </location>
</feature>
<feature type="compositionally biased region" description="Acidic residues" evidence="4">
    <location>
        <begin position="715"/>
        <end position="729"/>
    </location>
</feature>
<name>Y2237_DICDI</name>
<gene>
    <name type="ORF">DDB_G0282237</name>
</gene>
<protein>
    <recommendedName>
        <fullName>DDT domain-containing protein DDB_G0282237</fullName>
    </recommendedName>
</protein>
<evidence type="ECO:0000255" key="1"/>
<evidence type="ECO:0000255" key="2">
    <source>
        <dbReference type="PROSITE-ProRule" id="PRU00063"/>
    </source>
</evidence>
<evidence type="ECO:0000255" key="3">
    <source>
        <dbReference type="PROSITE-ProRule" id="PRU00475"/>
    </source>
</evidence>
<evidence type="ECO:0000256" key="4">
    <source>
        <dbReference type="SAM" id="MobiDB-lite"/>
    </source>
</evidence>
<accession>Q54ST3</accession>
<proteinExistence type="inferred from homology"/>
<dbReference type="EMBL" id="AAFI02000046">
    <property type="protein sequence ID" value="EAL66324.1"/>
    <property type="molecule type" value="Genomic_DNA"/>
</dbReference>
<dbReference type="RefSeq" id="XP_640302.1">
    <property type="nucleotide sequence ID" value="XM_635210.1"/>
</dbReference>
<dbReference type="STRING" id="44689.Q54ST3"/>
<dbReference type="PaxDb" id="44689-DDB0216395"/>
<dbReference type="EnsemblProtists" id="EAL66324">
    <property type="protein sequence ID" value="EAL66324"/>
    <property type="gene ID" value="DDB_G0282237"/>
</dbReference>
<dbReference type="GeneID" id="8623478"/>
<dbReference type="KEGG" id="ddi:DDB_G0282237"/>
<dbReference type="dictyBase" id="DDB_G0282237"/>
<dbReference type="VEuPathDB" id="AmoebaDB:DDB_G0282237"/>
<dbReference type="eggNOG" id="KOG1245">
    <property type="taxonomic scope" value="Eukaryota"/>
</dbReference>
<dbReference type="HOGENOM" id="CLU_012516_0_0_1"/>
<dbReference type="InParanoid" id="Q54ST3"/>
<dbReference type="OMA" id="YANKMGE"/>
<dbReference type="PRO" id="PR:Q54ST3"/>
<dbReference type="Proteomes" id="UP000002195">
    <property type="component" value="Chromosome 3"/>
</dbReference>
<dbReference type="GO" id="GO:0000785">
    <property type="term" value="C:chromatin"/>
    <property type="evidence" value="ECO:0007669"/>
    <property type="project" value="UniProtKB-ARBA"/>
</dbReference>
<dbReference type="GO" id="GO:0005634">
    <property type="term" value="C:nucleus"/>
    <property type="evidence" value="ECO:0007669"/>
    <property type="project" value="UniProtKB-SubCell"/>
</dbReference>
<dbReference type="InterPro" id="IPR018501">
    <property type="entry name" value="DDT_dom"/>
</dbReference>
<dbReference type="InterPro" id="IPR053271">
    <property type="entry name" value="DDT_domain"/>
</dbReference>
<dbReference type="InterPro" id="IPR028942">
    <property type="entry name" value="WHIM1_dom"/>
</dbReference>
<dbReference type="InterPro" id="IPR028941">
    <property type="entry name" value="WHIM2_dom"/>
</dbReference>
<dbReference type="InterPro" id="IPR013136">
    <property type="entry name" value="WSTF_Acf1_Cbp146"/>
</dbReference>
<dbReference type="PANTHER" id="PTHR15546">
    <property type="entry name" value="BROMODOMAIN ADJACENT TO ZINC FINGER DOMAIN, 2A"/>
    <property type="match status" value="1"/>
</dbReference>
<dbReference type="PANTHER" id="PTHR15546:SF2">
    <property type="entry name" value="DDT DOMAIN-CONTAINING PROTEIN DDB_G0282237"/>
    <property type="match status" value="1"/>
</dbReference>
<dbReference type="Pfam" id="PF02791">
    <property type="entry name" value="DDT"/>
    <property type="match status" value="1"/>
</dbReference>
<dbReference type="Pfam" id="PF10537">
    <property type="entry name" value="WAC_Acf1_DNA_bd"/>
    <property type="match status" value="1"/>
</dbReference>
<dbReference type="Pfam" id="PF15612">
    <property type="entry name" value="WHIM1"/>
    <property type="match status" value="1"/>
</dbReference>
<dbReference type="Pfam" id="PF15613">
    <property type="entry name" value="WSD"/>
    <property type="match status" value="1"/>
</dbReference>
<dbReference type="SMART" id="SM00571">
    <property type="entry name" value="DDT"/>
    <property type="match status" value="1"/>
</dbReference>
<dbReference type="PROSITE" id="PS50827">
    <property type="entry name" value="DDT"/>
    <property type="match status" value="1"/>
</dbReference>
<dbReference type="PROSITE" id="PS51136">
    <property type="entry name" value="WAC"/>
    <property type="match status" value="1"/>
</dbReference>
<comment type="subcellular location">
    <subcellularLocation>
        <location evidence="2 3">Nucleus</location>
    </subcellularLocation>
</comment>
<organism>
    <name type="scientific">Dictyostelium discoideum</name>
    <name type="common">Social amoeba</name>
    <dbReference type="NCBI Taxonomy" id="44689"/>
    <lineage>
        <taxon>Eukaryota</taxon>
        <taxon>Amoebozoa</taxon>
        <taxon>Evosea</taxon>
        <taxon>Eumycetozoa</taxon>
        <taxon>Dictyostelia</taxon>
        <taxon>Dictyosteliales</taxon>
        <taxon>Dictyosteliaceae</taxon>
        <taxon>Dictyostelium</taxon>
    </lineage>
</organism>
<sequence length="885" mass="104355">MPLHGKDPFELNKTRVKSGEEYFVIKFTKEHFKRYKDYIDRYELYRQKIWTCSITGKQNLTFEEALLSEKNASEKVSKVSELLLPHCLEFIQYKEITLEEMTNQLYEFLLMNYYPGEIVSFKKANVKYTGRIIELLENYNESDEQSDNEQQKKSSSSSSTTTTTTTPTTPPTTTTTTSSSINALSAIPIPKKEIKLQLYSDDENEEEDEKNNGDTSSDKKGEKEKEKEKEKEKEKEKEKEKEKEKEKEKEKEKEKDSDTKSVRKYVDPRKKLDSIKKYYKIYVDSQGKNFIINIKDIQKREPPIFKPMVKDTIKTVAKKTKHLGGFWEVEPELIKKYNLEGLKIPSSVRKEVEQHLKRKRIADGEILEDTEEESVDIESNDNSNSNGNSNSNNNLDSSDESETERKRKRPKYPIEDQDVDRENEETGKENERPIASSDFFCLSNTFGDFLMVWHFLNHFEKVLLLSPFPLDDFEMAIQHHTETNILVESHIRLMKTIFTLPSYSSGTPKKTFGGKAITDRNWLATLRAYFQNEVKRIAIEEKEKQEKLKQLEEQNIRMLNLANELPGSDDEDDEMKLDEDGNEIKKDVEMKDNDGTKDTKKDDEENEEEEEEEEEEEEEVASDEGEEEWKEENEIITSADANTICKVLKKKNYFKLSVEERIYILAYLVKQTIASEKIRKHLEKNVELGNEVKQEKKGIILEEKQLKQDDAAAAAEDDDENNEDDEEQQQQEVKKPKGAKQKKPITPVVEKEIEKLEKKLEILDEKLEKYSTRLESLGRDRNYRNYWYWYQLPSKIYVENENGGWEYYSSKKELDDLIKYLDNRGIRERKLLFNIKPKYDFIVSQLEKKNKEIIEQIQFESKRSQRIKQLYTEKSYISWENKYDY</sequence>